<dbReference type="EC" id="7.1.1.9"/>
<dbReference type="EMBL" id="AL939111">
    <property type="protein sequence ID" value="CAB39883.1"/>
    <property type="molecule type" value="Genomic_DNA"/>
</dbReference>
<dbReference type="PIR" id="T35538">
    <property type="entry name" value="T35538"/>
</dbReference>
<dbReference type="RefSeq" id="NP_626412.1">
    <property type="nucleotide sequence ID" value="NC_003888.3"/>
</dbReference>
<dbReference type="SMR" id="Q9X814"/>
<dbReference type="FunCoup" id="Q9X814">
    <property type="interactions" value="69"/>
</dbReference>
<dbReference type="STRING" id="100226.gene:17759754"/>
<dbReference type="TCDB" id="3.D.4.4.5">
    <property type="family name" value="the proton-translocating cytochrome oxidase (cox) superfamily"/>
</dbReference>
<dbReference type="PaxDb" id="100226-SCO2156"/>
<dbReference type="KEGG" id="sco:SCO2156"/>
<dbReference type="PATRIC" id="fig|100226.15.peg.2191"/>
<dbReference type="eggNOG" id="COG1622">
    <property type="taxonomic scope" value="Bacteria"/>
</dbReference>
<dbReference type="HOGENOM" id="CLU_036876_3_0_11"/>
<dbReference type="InParanoid" id="Q9X814"/>
<dbReference type="OrthoDB" id="9781261at2"/>
<dbReference type="PhylomeDB" id="Q9X814"/>
<dbReference type="Proteomes" id="UP000001973">
    <property type="component" value="Chromosome"/>
</dbReference>
<dbReference type="GO" id="GO:0005886">
    <property type="term" value="C:plasma membrane"/>
    <property type="evidence" value="ECO:0007669"/>
    <property type="project" value="UniProtKB-SubCell"/>
</dbReference>
<dbReference type="GO" id="GO:0005507">
    <property type="term" value="F:copper ion binding"/>
    <property type="evidence" value="ECO:0007669"/>
    <property type="project" value="InterPro"/>
</dbReference>
<dbReference type="GO" id="GO:0004129">
    <property type="term" value="F:cytochrome-c oxidase activity"/>
    <property type="evidence" value="ECO:0007669"/>
    <property type="project" value="UniProtKB-EC"/>
</dbReference>
<dbReference type="GO" id="GO:0042773">
    <property type="term" value="P:ATP synthesis coupled electron transport"/>
    <property type="evidence" value="ECO:0000318"/>
    <property type="project" value="GO_Central"/>
</dbReference>
<dbReference type="CDD" id="cd13919">
    <property type="entry name" value="CuRO_HCO_II_like_5"/>
    <property type="match status" value="1"/>
</dbReference>
<dbReference type="FunFam" id="1.10.287.90:FF:000003">
    <property type="entry name" value="Cytochrome C oxidase subunit II"/>
    <property type="match status" value="1"/>
</dbReference>
<dbReference type="Gene3D" id="1.10.287.90">
    <property type="match status" value="1"/>
</dbReference>
<dbReference type="Gene3D" id="2.60.40.420">
    <property type="entry name" value="Cupredoxins - blue copper proteins"/>
    <property type="match status" value="1"/>
</dbReference>
<dbReference type="InterPro" id="IPR045187">
    <property type="entry name" value="CcO_II"/>
</dbReference>
<dbReference type="InterPro" id="IPR002429">
    <property type="entry name" value="CcO_II-like_C"/>
</dbReference>
<dbReference type="InterPro" id="IPR001505">
    <property type="entry name" value="Copper_CuA"/>
</dbReference>
<dbReference type="InterPro" id="IPR008972">
    <property type="entry name" value="Cupredoxin"/>
</dbReference>
<dbReference type="InterPro" id="IPR014222">
    <property type="entry name" value="Cyt_c_oxidase_su2"/>
</dbReference>
<dbReference type="InterPro" id="IPR036257">
    <property type="entry name" value="Cyt_c_oxidase_su2_TM_sf"/>
</dbReference>
<dbReference type="NCBIfam" id="TIGR02866">
    <property type="entry name" value="CoxB"/>
    <property type="match status" value="1"/>
</dbReference>
<dbReference type="PANTHER" id="PTHR22888:SF9">
    <property type="entry name" value="CYTOCHROME C OXIDASE SUBUNIT 2"/>
    <property type="match status" value="1"/>
</dbReference>
<dbReference type="PANTHER" id="PTHR22888">
    <property type="entry name" value="CYTOCHROME C OXIDASE, SUBUNIT II"/>
    <property type="match status" value="1"/>
</dbReference>
<dbReference type="Pfam" id="PF00116">
    <property type="entry name" value="COX2"/>
    <property type="match status" value="1"/>
</dbReference>
<dbReference type="PRINTS" id="PR01166">
    <property type="entry name" value="CYCOXIDASEII"/>
</dbReference>
<dbReference type="SUPFAM" id="SSF49503">
    <property type="entry name" value="Cupredoxins"/>
    <property type="match status" value="1"/>
</dbReference>
<dbReference type="SUPFAM" id="SSF81464">
    <property type="entry name" value="Cytochrome c oxidase subunit II-like, transmembrane region"/>
    <property type="match status" value="1"/>
</dbReference>
<dbReference type="PROSITE" id="PS00078">
    <property type="entry name" value="COX2"/>
    <property type="match status" value="1"/>
</dbReference>
<dbReference type="PROSITE" id="PS50857">
    <property type="entry name" value="COX2_CUA"/>
    <property type="match status" value="1"/>
</dbReference>
<accession>Q9X814</accession>
<comment type="function">
    <text evidence="1">Subunits I and II form the functional core of the enzyme complex. Electrons originating in cytochrome c are transferred via heme a and Cu(A) to the binuclear center formed by heme a3 and Cu(B) (By similarity).</text>
</comment>
<comment type="catalytic activity">
    <reaction>
        <text>4 Fe(II)-[cytochrome c] + O2 + 8 H(+)(in) = 4 Fe(III)-[cytochrome c] + 2 H2O + 4 H(+)(out)</text>
        <dbReference type="Rhea" id="RHEA:11436"/>
        <dbReference type="Rhea" id="RHEA-COMP:10350"/>
        <dbReference type="Rhea" id="RHEA-COMP:14399"/>
        <dbReference type="ChEBI" id="CHEBI:15377"/>
        <dbReference type="ChEBI" id="CHEBI:15378"/>
        <dbReference type="ChEBI" id="CHEBI:15379"/>
        <dbReference type="ChEBI" id="CHEBI:29033"/>
        <dbReference type="ChEBI" id="CHEBI:29034"/>
        <dbReference type="EC" id="7.1.1.9"/>
    </reaction>
</comment>
<comment type="cofactor">
    <cofactor evidence="1">
        <name>Cu cation</name>
        <dbReference type="ChEBI" id="CHEBI:23378"/>
    </cofactor>
    <text evidence="1">Binds a copper A center.</text>
</comment>
<comment type="cofactor">
    <cofactor evidence="1">
        <name>heme</name>
        <dbReference type="ChEBI" id="CHEBI:30413"/>
    </cofactor>
</comment>
<comment type="subcellular location">
    <subcellularLocation>
        <location evidence="3">Cell membrane</location>
        <topology evidence="3">Multi-pass membrane protein</topology>
    </subcellularLocation>
</comment>
<comment type="similarity">
    <text evidence="3">Belongs to the cytochrome c oxidase subunit 2 family.</text>
</comment>
<reference key="1">
    <citation type="journal article" date="2002" name="Nature">
        <title>Complete genome sequence of the model actinomycete Streptomyces coelicolor A3(2).</title>
        <authorList>
            <person name="Bentley S.D."/>
            <person name="Chater K.F."/>
            <person name="Cerdeno-Tarraga A.-M."/>
            <person name="Challis G.L."/>
            <person name="Thomson N.R."/>
            <person name="James K.D."/>
            <person name="Harris D.E."/>
            <person name="Quail M.A."/>
            <person name="Kieser H."/>
            <person name="Harper D."/>
            <person name="Bateman A."/>
            <person name="Brown S."/>
            <person name="Chandra G."/>
            <person name="Chen C.W."/>
            <person name="Collins M."/>
            <person name="Cronin A."/>
            <person name="Fraser A."/>
            <person name="Goble A."/>
            <person name="Hidalgo J."/>
            <person name="Hornsby T."/>
            <person name="Howarth S."/>
            <person name="Huang C.-H."/>
            <person name="Kieser T."/>
            <person name="Larke L."/>
            <person name="Murphy L.D."/>
            <person name="Oliver K."/>
            <person name="O'Neil S."/>
            <person name="Rabbinowitsch E."/>
            <person name="Rajandream M.A."/>
            <person name="Rutherford K.M."/>
            <person name="Rutter S."/>
            <person name="Seeger K."/>
            <person name="Saunders D."/>
            <person name="Sharp S."/>
            <person name="Squares R."/>
            <person name="Squares S."/>
            <person name="Taylor K."/>
            <person name="Warren T."/>
            <person name="Wietzorrek A."/>
            <person name="Woodward J.R."/>
            <person name="Barrell B.G."/>
            <person name="Parkhill J."/>
            <person name="Hopwood D.A."/>
        </authorList>
    </citation>
    <scope>NUCLEOTIDE SEQUENCE [LARGE SCALE GENOMIC DNA]</scope>
    <source>
        <strain>ATCC BAA-471 / A3(2) / M145</strain>
    </source>
</reference>
<proteinExistence type="inferred from homology"/>
<keyword id="KW-1003">Cell membrane</keyword>
<keyword id="KW-0186">Copper</keyword>
<keyword id="KW-0249">Electron transport</keyword>
<keyword id="KW-0472">Membrane</keyword>
<keyword id="KW-0479">Metal-binding</keyword>
<keyword id="KW-1185">Reference proteome</keyword>
<keyword id="KW-0679">Respiratory chain</keyword>
<keyword id="KW-0732">Signal</keyword>
<keyword id="KW-1278">Translocase</keyword>
<keyword id="KW-0812">Transmembrane</keyword>
<keyword id="KW-1133">Transmembrane helix</keyword>
<keyword id="KW-0813">Transport</keyword>
<gene>
    <name type="primary">ctaC</name>
    <name type="ordered locus">SCO2156</name>
    <name type="ORF">SC6G10.29c</name>
</gene>
<organism>
    <name type="scientific">Streptomyces coelicolor (strain ATCC BAA-471 / A3(2) / M145)</name>
    <dbReference type="NCBI Taxonomy" id="100226"/>
    <lineage>
        <taxon>Bacteria</taxon>
        <taxon>Bacillati</taxon>
        <taxon>Actinomycetota</taxon>
        <taxon>Actinomycetes</taxon>
        <taxon>Kitasatosporales</taxon>
        <taxon>Streptomycetaceae</taxon>
        <taxon>Streptomyces</taxon>
        <taxon>Streptomyces albidoflavus group</taxon>
    </lineage>
</organism>
<sequence length="319" mass="35447">MSPNGSDRSPRRPMRRKLLQALTAGLVLATATGCTYEDFPRLGMPTPTTEEAPRILSLWQGSWAAALATGVLVWGLILWSVFFHRRSRTKVEVPPQTRYNLPIEALYTMVPLVIVSVLFYFTARDESDLMSLNKKPDLTVNVVGFQWSWCFNHIEDVPGSTGDAKTSKELAGIPDRFIEDFPANAGGVYDCGTPGTENPQTGNPGPTLWLPKGKTVRFVLTSRDVIHSFWVVPFLMKQDVIPGHTNAFEVTPNKEGTFLGKCAELCGVDHSRMLFNVKVVSPERYEQHLQDLAKKGQTGYVPAGIAQTSHEKNRETNNL</sequence>
<feature type="signal peptide" evidence="2">
    <location>
        <begin position="1"/>
        <end position="33"/>
    </location>
</feature>
<feature type="chain" id="PRO_0000006063" description="Probable cytochrome c oxidase subunit 2">
    <location>
        <begin position="34"/>
        <end position="319"/>
    </location>
</feature>
<feature type="transmembrane region" description="Helical" evidence="2">
    <location>
        <begin position="63"/>
        <end position="83"/>
    </location>
</feature>
<feature type="transmembrane region" description="Helical" evidence="2">
    <location>
        <begin position="101"/>
        <end position="121"/>
    </location>
</feature>
<feature type="binding site" evidence="2">
    <location>
        <position position="227"/>
    </location>
    <ligand>
        <name>Cu cation</name>
        <dbReference type="ChEBI" id="CHEBI:23378"/>
        <label>A</label>
    </ligand>
</feature>
<feature type="binding site" evidence="2">
    <location>
        <position position="262"/>
    </location>
    <ligand>
        <name>Cu cation</name>
        <dbReference type="ChEBI" id="CHEBI:23378"/>
        <label>A</label>
    </ligand>
</feature>
<feature type="binding site" evidence="2">
    <location>
        <position position="266"/>
    </location>
    <ligand>
        <name>Cu cation</name>
        <dbReference type="ChEBI" id="CHEBI:23378"/>
        <label>A</label>
    </ligand>
</feature>
<feature type="binding site" evidence="2">
    <location>
        <position position="270"/>
    </location>
    <ligand>
        <name>Cu cation</name>
        <dbReference type="ChEBI" id="CHEBI:23378"/>
        <label>A</label>
    </ligand>
</feature>
<evidence type="ECO:0000250" key="1"/>
<evidence type="ECO:0000255" key="2"/>
<evidence type="ECO:0000305" key="3"/>
<protein>
    <recommendedName>
        <fullName>Probable cytochrome c oxidase subunit 2</fullName>
        <ecNumber>7.1.1.9</ecNumber>
    </recommendedName>
    <alternativeName>
        <fullName>Cytochrome aa3 subunit 2</fullName>
    </alternativeName>
    <alternativeName>
        <fullName>Cytochrome c oxidase polypeptide II</fullName>
    </alternativeName>
    <alternativeName>
        <fullName>Mtb92</fullName>
    </alternativeName>
</protein>
<name>COX2_STRCO</name>